<comment type="similarity">
    <text evidence="1">Belongs to the UPF0637 family.</text>
</comment>
<dbReference type="EMBL" id="AP006716">
    <property type="protein sequence ID" value="BAE05155.1"/>
    <property type="molecule type" value="Genomic_DNA"/>
</dbReference>
<dbReference type="RefSeq" id="WP_011276122.1">
    <property type="nucleotide sequence ID" value="NC_007168.1"/>
</dbReference>
<dbReference type="SMR" id="Q4L5C0"/>
<dbReference type="KEGG" id="sha:SH1846"/>
<dbReference type="eggNOG" id="COG4493">
    <property type="taxonomic scope" value="Bacteria"/>
</dbReference>
<dbReference type="HOGENOM" id="CLU_096059_0_0_9"/>
<dbReference type="OrthoDB" id="9812818at2"/>
<dbReference type="Proteomes" id="UP000000543">
    <property type="component" value="Chromosome"/>
</dbReference>
<dbReference type="Gene3D" id="3.30.930.20">
    <property type="entry name" value="Protein of unknown function DUF1054"/>
    <property type="match status" value="1"/>
</dbReference>
<dbReference type="HAMAP" id="MF_01851">
    <property type="entry name" value="UPF0637"/>
    <property type="match status" value="1"/>
</dbReference>
<dbReference type="InterPro" id="IPR009403">
    <property type="entry name" value="UPF0637"/>
</dbReference>
<dbReference type="InterPro" id="IPR053707">
    <property type="entry name" value="UPF0637_domain_sf"/>
</dbReference>
<dbReference type="Pfam" id="PF06335">
    <property type="entry name" value="DUF1054"/>
    <property type="match status" value="1"/>
</dbReference>
<dbReference type="PIRSF" id="PIRSF021332">
    <property type="entry name" value="DUF1054"/>
    <property type="match status" value="1"/>
</dbReference>
<dbReference type="SUPFAM" id="SSF142913">
    <property type="entry name" value="YktB/PF0168-like"/>
    <property type="match status" value="1"/>
</dbReference>
<protein>
    <recommendedName>
        <fullName evidence="1">UPF0637 protein SH1846</fullName>
    </recommendedName>
</protein>
<accession>Q4L5C0</accession>
<proteinExistence type="inferred from homology"/>
<evidence type="ECO:0000255" key="1">
    <source>
        <dbReference type="HAMAP-Rule" id="MF_01851"/>
    </source>
</evidence>
<sequence length="203" mass="23899">MTQYTFKPKDFKAFEVEGLDARMEALNEYVRPQLNQLGDYFSEYFTSQTGETFYAHVAKHARRSVNPPVDTWVAFAPNKRGYKMLPHFQIGLFKDHLFLMFGVMHEGKDKAERVKVFDKHFDVLKQLPEDYQVSLDHMKPEKSYIKDLSDDELHKAIDRVKNVKKGEFFVARSLSPKDAELKSDKAFLSFVKETFDEFLKFYE</sequence>
<reference key="1">
    <citation type="journal article" date="2005" name="J. Bacteriol.">
        <title>Whole-genome sequencing of Staphylococcus haemolyticus uncovers the extreme plasticity of its genome and the evolution of human-colonizing staphylococcal species.</title>
        <authorList>
            <person name="Takeuchi F."/>
            <person name="Watanabe S."/>
            <person name="Baba T."/>
            <person name="Yuzawa H."/>
            <person name="Ito T."/>
            <person name="Morimoto Y."/>
            <person name="Kuroda M."/>
            <person name="Cui L."/>
            <person name="Takahashi M."/>
            <person name="Ankai A."/>
            <person name="Baba S."/>
            <person name="Fukui S."/>
            <person name="Lee J.C."/>
            <person name="Hiramatsu K."/>
        </authorList>
    </citation>
    <scope>NUCLEOTIDE SEQUENCE [LARGE SCALE GENOMIC DNA]</scope>
    <source>
        <strain>JCSC1435</strain>
    </source>
</reference>
<organism>
    <name type="scientific">Staphylococcus haemolyticus (strain JCSC1435)</name>
    <dbReference type="NCBI Taxonomy" id="279808"/>
    <lineage>
        <taxon>Bacteria</taxon>
        <taxon>Bacillati</taxon>
        <taxon>Bacillota</taxon>
        <taxon>Bacilli</taxon>
        <taxon>Bacillales</taxon>
        <taxon>Staphylococcaceae</taxon>
        <taxon>Staphylococcus</taxon>
    </lineage>
</organism>
<gene>
    <name type="ordered locus">SH1846</name>
</gene>
<name>Y1846_STAHJ</name>
<feature type="chain" id="PRO_0000348335" description="UPF0637 protein SH1846">
    <location>
        <begin position="1"/>
        <end position="203"/>
    </location>
</feature>